<comment type="catalytic activity">
    <reaction>
        <text>O-acetyl-L-serine + hydrogen sulfide = L-cysteine + acetate</text>
        <dbReference type="Rhea" id="RHEA:14829"/>
        <dbReference type="ChEBI" id="CHEBI:29919"/>
        <dbReference type="ChEBI" id="CHEBI:30089"/>
        <dbReference type="ChEBI" id="CHEBI:35235"/>
        <dbReference type="ChEBI" id="CHEBI:58340"/>
        <dbReference type="EC" id="2.5.1.47"/>
    </reaction>
</comment>
<comment type="cofactor">
    <cofactor evidence="1">
        <name>pyridoxal 5'-phosphate</name>
        <dbReference type="ChEBI" id="CHEBI:597326"/>
    </cofactor>
</comment>
<comment type="pathway">
    <text>Amino-acid biosynthesis; L-cysteine biosynthesis; L-cysteine from L-serine: step 2/2.</text>
</comment>
<comment type="subunit">
    <text evidence="1">Homodimer.</text>
</comment>
<comment type="similarity">
    <text evidence="2">Belongs to the cysteine synthase/cystathionine beta-synthase family.</text>
</comment>
<keyword id="KW-0028">Amino-acid biosynthesis</keyword>
<keyword id="KW-0198">Cysteine biosynthesis</keyword>
<keyword id="KW-0663">Pyridoxal phosphate</keyword>
<keyword id="KW-1185">Reference proteome</keyword>
<keyword id="KW-0808">Transferase</keyword>
<reference key="1">
    <citation type="journal article" date="2005" name="J. Bacteriol.">
        <title>Insights on evolution of virulence and resistance from the complete genome analysis of an early methicillin-resistant Staphylococcus aureus strain and a biofilm-producing methicillin-resistant Staphylococcus epidermidis strain.</title>
        <authorList>
            <person name="Gill S.R."/>
            <person name="Fouts D.E."/>
            <person name="Archer G.L."/>
            <person name="Mongodin E.F."/>
            <person name="DeBoy R.T."/>
            <person name="Ravel J."/>
            <person name="Paulsen I.T."/>
            <person name="Kolonay J.F."/>
            <person name="Brinkac L.M."/>
            <person name="Beanan M.J."/>
            <person name="Dodson R.J."/>
            <person name="Daugherty S.C."/>
            <person name="Madupu R."/>
            <person name="Angiuoli S.V."/>
            <person name="Durkin A.S."/>
            <person name="Haft D.H."/>
            <person name="Vamathevan J.J."/>
            <person name="Khouri H."/>
            <person name="Utterback T.R."/>
            <person name="Lee C."/>
            <person name="Dimitrov G."/>
            <person name="Jiang L."/>
            <person name="Qin H."/>
            <person name="Weidman J."/>
            <person name="Tran K."/>
            <person name="Kang K.H."/>
            <person name="Hance I.R."/>
            <person name="Nelson K.E."/>
            <person name="Fraser C.M."/>
        </authorList>
    </citation>
    <scope>NUCLEOTIDE SEQUENCE [LARGE SCALE GENOMIC DNA]</scope>
    <source>
        <strain>ATCC 35984 / DSM 28319 / BCRC 17069 / CCUG 31568 / BM 3577 / RP62A</strain>
    </source>
</reference>
<protein>
    <recommendedName>
        <fullName>Cysteine synthase</fullName>
        <shortName>CSase</shortName>
        <ecNumber>2.5.1.47</ecNumber>
    </recommendedName>
    <alternativeName>
        <fullName>O-acetylserine (thiol)-lyase</fullName>
        <shortName>OAS-TL</shortName>
    </alternativeName>
    <alternativeName>
        <fullName>O-acetylserine sulfhydrylase</fullName>
    </alternativeName>
</protein>
<proteinExistence type="inferred from homology"/>
<gene>
    <name type="primary">cysK</name>
    <name type="ordered locus">SERP0152</name>
</gene>
<sequence length="310" mass="33152">MAQKPVDYVTQIIGNTPVVKLRNVVDDDAADIYVKLEYQNPGGSVKDRIALAMIEKAEREGKIKPGDTIVEPTSGNTGIGLAFVCAAKGYKAVFTMPETMSQERRNLLKAYGAELVLTPGSEAMKGAIKKAKELKEEHGYFEPQQFENPANPEIHELTTGPELVEQFEGRQIDAFLAGVGTGGTLSGVGKVLKKEYPNVEIVAIEPEASPVLSGGEPGPHKLQGLGAGFVPDTLNTEVYDSIIKVGNDTAMDMARRVAREEGILAGISSGAAIYAAIQKAKELGKGKTVVTVLPSNGERYLSTPLYSFDN</sequence>
<dbReference type="EC" id="2.5.1.47"/>
<dbReference type="EMBL" id="CP000029">
    <property type="protein sequence ID" value="AAW53521.1"/>
    <property type="molecule type" value="Genomic_DNA"/>
</dbReference>
<dbReference type="RefSeq" id="WP_001832242.1">
    <property type="nucleotide sequence ID" value="NC_002976.3"/>
</dbReference>
<dbReference type="SMR" id="Q5HRP1"/>
<dbReference type="STRING" id="176279.SERP0152"/>
<dbReference type="GeneID" id="50019576"/>
<dbReference type="KEGG" id="ser:SERP0152"/>
<dbReference type="eggNOG" id="COG0031">
    <property type="taxonomic scope" value="Bacteria"/>
</dbReference>
<dbReference type="HOGENOM" id="CLU_021018_1_0_9"/>
<dbReference type="UniPathway" id="UPA00136">
    <property type="reaction ID" value="UER00200"/>
</dbReference>
<dbReference type="Proteomes" id="UP000000531">
    <property type="component" value="Chromosome"/>
</dbReference>
<dbReference type="GO" id="GO:0004124">
    <property type="term" value="F:cysteine synthase activity"/>
    <property type="evidence" value="ECO:0007669"/>
    <property type="project" value="UniProtKB-EC"/>
</dbReference>
<dbReference type="GO" id="GO:0006535">
    <property type="term" value="P:cysteine biosynthetic process from serine"/>
    <property type="evidence" value="ECO:0007669"/>
    <property type="project" value="InterPro"/>
</dbReference>
<dbReference type="CDD" id="cd01561">
    <property type="entry name" value="CBS_like"/>
    <property type="match status" value="1"/>
</dbReference>
<dbReference type="FunFam" id="3.40.50.1100:FF:000003">
    <property type="entry name" value="Cystathionine beta-synthase"/>
    <property type="match status" value="1"/>
</dbReference>
<dbReference type="FunFam" id="3.40.50.1100:FF:000118">
    <property type="entry name" value="Related to CYS4-cystathionine beta-synthase"/>
    <property type="match status" value="1"/>
</dbReference>
<dbReference type="Gene3D" id="3.40.50.1100">
    <property type="match status" value="2"/>
</dbReference>
<dbReference type="InterPro" id="IPR005856">
    <property type="entry name" value="Cys_synth"/>
</dbReference>
<dbReference type="InterPro" id="IPR050214">
    <property type="entry name" value="Cys_Synth/Cystath_Beta-Synth"/>
</dbReference>
<dbReference type="InterPro" id="IPR005859">
    <property type="entry name" value="CysK"/>
</dbReference>
<dbReference type="InterPro" id="IPR001216">
    <property type="entry name" value="P-phosphate_BS"/>
</dbReference>
<dbReference type="InterPro" id="IPR001926">
    <property type="entry name" value="TrpB-like_PALP"/>
</dbReference>
<dbReference type="InterPro" id="IPR036052">
    <property type="entry name" value="TrpB-like_PALP_sf"/>
</dbReference>
<dbReference type="NCBIfam" id="TIGR01139">
    <property type="entry name" value="cysK"/>
    <property type="match status" value="1"/>
</dbReference>
<dbReference type="NCBIfam" id="TIGR01136">
    <property type="entry name" value="cysKM"/>
    <property type="match status" value="1"/>
</dbReference>
<dbReference type="PANTHER" id="PTHR10314">
    <property type="entry name" value="CYSTATHIONINE BETA-SYNTHASE"/>
    <property type="match status" value="1"/>
</dbReference>
<dbReference type="Pfam" id="PF00291">
    <property type="entry name" value="PALP"/>
    <property type="match status" value="1"/>
</dbReference>
<dbReference type="SUPFAM" id="SSF53686">
    <property type="entry name" value="Tryptophan synthase beta subunit-like PLP-dependent enzymes"/>
    <property type="match status" value="1"/>
</dbReference>
<dbReference type="PROSITE" id="PS00901">
    <property type="entry name" value="CYS_SYNTHASE"/>
    <property type="match status" value="1"/>
</dbReference>
<feature type="chain" id="PRO_0000167102" description="Cysteine synthase">
    <location>
        <begin position="1"/>
        <end position="310"/>
    </location>
</feature>
<feature type="binding site" evidence="1">
    <location>
        <position position="76"/>
    </location>
    <ligand>
        <name>pyridoxal 5'-phosphate</name>
        <dbReference type="ChEBI" id="CHEBI:597326"/>
    </ligand>
</feature>
<feature type="binding site" evidence="1">
    <location>
        <begin position="180"/>
        <end position="184"/>
    </location>
    <ligand>
        <name>pyridoxal 5'-phosphate</name>
        <dbReference type="ChEBI" id="CHEBI:597326"/>
    </ligand>
</feature>
<feature type="binding site" evidence="1">
    <location>
        <position position="268"/>
    </location>
    <ligand>
        <name>pyridoxal 5'-phosphate</name>
        <dbReference type="ChEBI" id="CHEBI:597326"/>
    </ligand>
</feature>
<feature type="modified residue" description="N6-(pyridoxal phosphate)lysine" evidence="1">
    <location>
        <position position="46"/>
    </location>
</feature>
<name>CYSK_STAEQ</name>
<organism>
    <name type="scientific">Staphylococcus epidermidis (strain ATCC 35984 / DSM 28319 / BCRC 17069 / CCUG 31568 / BM 3577 / RP62A)</name>
    <dbReference type="NCBI Taxonomy" id="176279"/>
    <lineage>
        <taxon>Bacteria</taxon>
        <taxon>Bacillati</taxon>
        <taxon>Bacillota</taxon>
        <taxon>Bacilli</taxon>
        <taxon>Bacillales</taxon>
        <taxon>Staphylococcaceae</taxon>
        <taxon>Staphylococcus</taxon>
    </lineage>
</organism>
<accession>Q5HRP1</accession>
<evidence type="ECO:0000250" key="1"/>
<evidence type="ECO:0000305" key="2"/>